<organism>
    <name type="scientific">Homo sapiens</name>
    <name type="common">Human</name>
    <dbReference type="NCBI Taxonomy" id="9606"/>
    <lineage>
        <taxon>Eukaryota</taxon>
        <taxon>Metazoa</taxon>
        <taxon>Chordata</taxon>
        <taxon>Craniata</taxon>
        <taxon>Vertebrata</taxon>
        <taxon>Euteleostomi</taxon>
        <taxon>Mammalia</taxon>
        <taxon>Eutheria</taxon>
        <taxon>Euarchontoglires</taxon>
        <taxon>Primates</taxon>
        <taxon>Haplorrhini</taxon>
        <taxon>Catarrhini</taxon>
        <taxon>Hominidae</taxon>
        <taxon>Homo</taxon>
    </lineage>
</organism>
<proteinExistence type="evidence at protein level"/>
<accession>O00170</accession>
<accession>A0SZW3</accession>
<accession>A0SZW4</accession>
<accession>A0SZW5</accession>
<accession>A0SZW6</accession>
<accession>G9I2H4</accession>
<accession>Q2M3Q2</accession>
<accession>Q99606</accession>
<comment type="function">
    <text>May play a positive role in AHR-mediated (aromatic hydrocarbon receptor) signaling, possibly by influencing its receptivity for ligand and/or its nuclear targeting.</text>
</comment>
<comment type="function">
    <text>Cellular negative regulator of the hepatitis B virus (HBV) X protein.</text>
</comment>
<comment type="subunit">
    <text evidence="11">Interacts with RET in the pituitary gland; this interaction prevents the formation of the AIP-survivin complex.</text>
</comment>
<comment type="interaction">
    <interactant intactId="EBI-704197">
        <id>O00170</id>
    </interactant>
    <interactant intactId="EBI-347804">
        <id>P68400</id>
        <label>CSNK2A1</label>
    </interactant>
    <organismsDiffer>false</organismsDiffer>
    <experiments>2</experiments>
</comment>
<comment type="interaction">
    <interactant intactId="EBI-704197">
        <id>O00170</id>
    </interactant>
    <interactant intactId="EBI-297353">
        <id>P00533</id>
        <label>EGFR</label>
    </interactant>
    <organismsDiffer>false</organismsDiffer>
    <experiments>2</experiments>
</comment>
<comment type="interaction">
    <interactant intactId="EBI-704197">
        <id>O00170</id>
    </interactant>
    <interactant intactId="EBI-352572">
        <id>P08238</id>
        <label>HSP90AB1</label>
    </interactant>
    <organismsDiffer>false</organismsDiffer>
    <experiments>8</experiments>
</comment>
<comment type="interaction">
    <interactant intactId="EBI-704197">
        <id>O00170</id>
    </interactant>
    <interactant intactId="EBI-968267">
        <id>Q92985</id>
        <label>IRF7</label>
    </interactant>
    <organismsDiffer>false</organismsDiffer>
    <experiments>2</experiments>
</comment>
<comment type="interaction">
    <interactant intactId="EBI-704197">
        <id>O00170</id>
    </interactant>
    <interactant intactId="EBI-1785967">
        <id>O00408</id>
        <label>PDE2A</label>
    </interactant>
    <organismsDiffer>false</organismsDiffer>
    <experiments>6</experiments>
</comment>
<comment type="interaction">
    <interactant intactId="EBI-704197">
        <id>O00170</id>
    </interactant>
    <interactant intactId="EBI-21648956">
        <id>O60809</id>
        <label>PRAMEF10</label>
    </interactant>
    <organismsDiffer>false</organismsDiffer>
    <experiments>2</experiments>
</comment>
<comment type="interaction">
    <interactant intactId="EBI-704197">
        <id>O00170</id>
    </interactant>
    <interactant intactId="EBI-20898442">
        <id>Q0VAF6</id>
        <label>SYCN</label>
    </interactant>
    <organismsDiffer>false</organismsDiffer>
    <experiments>2</experiments>
</comment>
<comment type="subcellular location">
    <subcellularLocation>
        <location>Cytoplasm</location>
    </subcellularLocation>
</comment>
<comment type="tissue specificity">
    <text>Widely expressed. Higher levels seen in the heart, placenta and skeletal muscle. Not expressed in the liver.</text>
</comment>
<comment type="disease" evidence="5 6 7 8 9 10">
    <disease id="DI-01689">
        <name>Pituitary adenoma 1, multiple types</name>
        <acronym>PITA1</acronym>
        <description>A form of pituitary adenoma, a neoplasm of the pituitary gland and one of the most common neuroendocrine tumors. Pituitary adenomas are clinically classified as functional and non-functional tumors, and manifest with a variety of features, including local invasion of surrounding structures and excessive hormone secretion. Functional pituitary adenomas are further classified by the type of hormone they secrete: growth hormone (GH)-secreting, prolactin (PRL)-secreting, adrenocorticotropin (ACTH)-secreting, thyroid- stimulating hormone (TSH)-secreting, and plurihormonal (GH and TSH) tumors. Familial and sporadic forms have been reported.</description>
        <dbReference type="MIM" id="102200"/>
    </disease>
    <text>The disease is caused by variants affecting the gene represented in this entry.</text>
</comment>
<comment type="online information" name="Atlas of Genetics and Cytogenetics in Oncology and Haematology">
    <link uri="https://atlasgeneticsoncology.org/gene/604/AIP"/>
</comment>
<gene>
    <name type="primary">AIP</name>
    <name type="synonym">XAP2</name>
</gene>
<name>AIP_HUMAN</name>
<sequence length="330" mass="37664">MADIIARLREDGIQKRVIQEGRGELPDFQDGTKATFHYRTLHSDDEGTVLDDSRARGKPMELIIGKKFKLPVWETIVCTMREGEIAQFLCDIKHVVLYPLVAKSLRNIAVGKDPLEGQRHCCGVAQMREHSSLGHADLDALQQNPQPLIFHMEMLKVESPGTYQQDPWAMTDEEKAKAVPLIHQEGNRLYREGHVKEAAAKYYDAIACLKNLQMKEQPGSPEWIQLDQQITPLLLNYCQCKLVVEEYYEVLDHCSSILNKYDDNVKAYFKRGKAHAAVWNAQEAQADFAKVLELDPALAPVVSRELRALEARIRQKDEEDKARFRGIFSH</sequence>
<keyword id="KW-0002">3D-structure</keyword>
<keyword id="KW-1062">Cushing syndrome</keyword>
<keyword id="KW-0963">Cytoplasm</keyword>
<keyword id="KW-0597">Phosphoprotein</keyword>
<keyword id="KW-1267">Proteomics identification</keyword>
<keyword id="KW-1185">Reference proteome</keyword>
<keyword id="KW-0677">Repeat</keyword>
<keyword id="KW-0802">TPR repeat</keyword>
<dbReference type="EMBL" id="U31913">
    <property type="protein sequence ID" value="AAB39923.1"/>
    <property type="molecule type" value="mRNA"/>
</dbReference>
<dbReference type="EMBL" id="U78521">
    <property type="protein sequence ID" value="AAB59004.1"/>
    <property type="molecule type" value="mRNA"/>
</dbReference>
<dbReference type="EMBL" id="AM236341">
    <property type="protein sequence ID" value="CAJ85657.1"/>
    <property type="molecule type" value="Genomic_DNA"/>
</dbReference>
<dbReference type="EMBL" id="EF066502">
    <property type="protein sequence ID" value="ABK60081.1"/>
    <property type="molecule type" value="Genomic_DNA"/>
</dbReference>
<dbReference type="EMBL" id="EF066504">
    <property type="protein sequence ID" value="ABK60082.1"/>
    <property type="molecule type" value="Genomic_DNA"/>
</dbReference>
<dbReference type="EMBL" id="EF066505">
    <property type="protein sequence ID" value="ABK60083.1"/>
    <property type="molecule type" value="Genomic_DNA"/>
</dbReference>
<dbReference type="EMBL" id="EF066510">
    <property type="protein sequence ID" value="ABK60084.1"/>
    <property type="molecule type" value="Genomic_DNA"/>
</dbReference>
<dbReference type="EMBL" id="JN561683">
    <property type="protein sequence ID" value="AEW31446.1"/>
    <property type="molecule type" value="Genomic_DNA"/>
</dbReference>
<dbReference type="EMBL" id="AP001184">
    <property type="status" value="NOT_ANNOTATED_CDS"/>
    <property type="molecule type" value="Genomic_DNA"/>
</dbReference>
<dbReference type="EMBL" id="AP003419">
    <property type="status" value="NOT_ANNOTATED_CDS"/>
    <property type="molecule type" value="Genomic_DNA"/>
</dbReference>
<dbReference type="EMBL" id="KF455413">
    <property type="status" value="NOT_ANNOTATED_CDS"/>
    <property type="molecule type" value="Genomic_DNA"/>
</dbReference>
<dbReference type="EMBL" id="BC104827">
    <property type="protein sequence ID" value="AAI04828.1"/>
    <property type="molecule type" value="mRNA"/>
</dbReference>
<dbReference type="EMBL" id="BC104797">
    <property type="protein sequence ID" value="AAI04798.1"/>
    <property type="molecule type" value="mRNA"/>
</dbReference>
<dbReference type="CCDS" id="CCDS8168.1"/>
<dbReference type="RefSeq" id="NP_001289888.1">
    <property type="nucleotide sequence ID" value="NM_001302959.1"/>
</dbReference>
<dbReference type="RefSeq" id="NP_001289889.1">
    <property type="nucleotide sequence ID" value="NM_001302960.1"/>
</dbReference>
<dbReference type="RefSeq" id="NP_003968.3">
    <property type="nucleotide sequence ID" value="NM_003977.4"/>
</dbReference>
<dbReference type="PDB" id="2LKN">
    <property type="method" value="NMR"/>
    <property type="chains" value="A=2-166"/>
</dbReference>
<dbReference type="PDB" id="4AIF">
    <property type="method" value="X-ray"/>
    <property type="resolution" value="2.01 A"/>
    <property type="chains" value="A/B=172-315"/>
</dbReference>
<dbReference type="PDB" id="4APO">
    <property type="method" value="X-ray"/>
    <property type="resolution" value="1.90 A"/>
    <property type="chains" value="A/B=166-330"/>
</dbReference>
<dbReference type="PDB" id="7ZUB">
    <property type="method" value="EM"/>
    <property type="resolution" value="2.85 A"/>
    <property type="chains" value="C=1-330"/>
</dbReference>
<dbReference type="PDB" id="8QMO">
    <property type="method" value="EM"/>
    <property type="resolution" value="2.76 A"/>
    <property type="chains" value="C=1-330"/>
</dbReference>
<dbReference type="PDBsum" id="2LKN"/>
<dbReference type="PDBsum" id="4AIF"/>
<dbReference type="PDBsum" id="4APO"/>
<dbReference type="PDBsum" id="7ZUB"/>
<dbReference type="PDBsum" id="8QMO"/>
<dbReference type="BMRB" id="O00170"/>
<dbReference type="EMDB" id="EMD-14971"/>
<dbReference type="EMDB" id="EMD-18498"/>
<dbReference type="SMR" id="O00170"/>
<dbReference type="BioGRID" id="114511">
    <property type="interactions" value="198"/>
</dbReference>
<dbReference type="CORUM" id="O00170"/>
<dbReference type="DIP" id="DIP-34068N"/>
<dbReference type="FunCoup" id="O00170">
    <property type="interactions" value="2458"/>
</dbReference>
<dbReference type="IntAct" id="O00170">
    <property type="interactions" value="109"/>
</dbReference>
<dbReference type="MINT" id="O00170"/>
<dbReference type="STRING" id="9606.ENSP00000279146"/>
<dbReference type="ChEMBL" id="CHEMBL4295645"/>
<dbReference type="GlyGen" id="O00170">
    <property type="glycosylation" value="1 site, 1 O-linked glycan (1 site)"/>
</dbReference>
<dbReference type="iPTMnet" id="O00170"/>
<dbReference type="MetOSite" id="O00170"/>
<dbReference type="PhosphoSitePlus" id="O00170"/>
<dbReference type="BioMuta" id="AIP"/>
<dbReference type="CPTAC" id="CPTAC-307"/>
<dbReference type="CPTAC" id="CPTAC-308"/>
<dbReference type="jPOST" id="O00170"/>
<dbReference type="MassIVE" id="O00170"/>
<dbReference type="PaxDb" id="9606-ENSP00000279146"/>
<dbReference type="PeptideAtlas" id="O00170"/>
<dbReference type="ProteomicsDB" id="47760"/>
<dbReference type="Pumba" id="O00170"/>
<dbReference type="Antibodypedia" id="1367">
    <property type="antibodies" value="418 antibodies from 35 providers"/>
</dbReference>
<dbReference type="DNASU" id="9049"/>
<dbReference type="Ensembl" id="ENST00000279146.8">
    <property type="protein sequence ID" value="ENSP00000279146.3"/>
    <property type="gene ID" value="ENSG00000110711.11"/>
</dbReference>
<dbReference type="GeneID" id="9049"/>
<dbReference type="KEGG" id="hsa:9049"/>
<dbReference type="MANE-Select" id="ENST00000279146.8">
    <property type="protein sequence ID" value="ENSP00000279146.3"/>
    <property type="RefSeq nucleotide sequence ID" value="NM_003977.4"/>
    <property type="RefSeq protein sequence ID" value="NP_003968.3"/>
</dbReference>
<dbReference type="UCSC" id="uc001olv.4">
    <property type="organism name" value="human"/>
</dbReference>
<dbReference type="AGR" id="HGNC:358"/>
<dbReference type="CTD" id="9049"/>
<dbReference type="DisGeNET" id="9049"/>
<dbReference type="GeneCards" id="AIP"/>
<dbReference type="GeneReviews" id="AIP"/>
<dbReference type="HGNC" id="HGNC:358">
    <property type="gene designation" value="AIP"/>
</dbReference>
<dbReference type="HPA" id="ENSG00000110711">
    <property type="expression patterns" value="Low tissue specificity"/>
</dbReference>
<dbReference type="MalaCards" id="AIP"/>
<dbReference type="MIM" id="102200">
    <property type="type" value="phenotype"/>
</dbReference>
<dbReference type="MIM" id="605555">
    <property type="type" value="gene"/>
</dbReference>
<dbReference type="neXtProt" id="NX_O00170"/>
<dbReference type="OpenTargets" id="ENSG00000110711"/>
<dbReference type="Orphanet" id="963">
    <property type="disease" value="Acromegaly"/>
</dbReference>
<dbReference type="Orphanet" id="314777">
    <property type="disease" value="Familial isolated pituitary adenoma"/>
</dbReference>
<dbReference type="Orphanet" id="314790">
    <property type="disease" value="Null pituitary adenoma"/>
</dbReference>
<dbReference type="Orphanet" id="99725">
    <property type="disease" value="Pituitary gigantism"/>
</dbReference>
<dbReference type="Orphanet" id="2965">
    <property type="disease" value="Prolactinoma"/>
</dbReference>
<dbReference type="Orphanet" id="314786">
    <property type="disease" value="Silent pituitary adenoma"/>
</dbReference>
<dbReference type="PharmGKB" id="PA24652"/>
<dbReference type="VEuPathDB" id="HostDB:ENSG00000110711"/>
<dbReference type="eggNOG" id="KOG0545">
    <property type="taxonomic scope" value="Eukaryota"/>
</dbReference>
<dbReference type="GeneTree" id="ENSGT00390000001289"/>
<dbReference type="InParanoid" id="O00170"/>
<dbReference type="OMA" id="SHCCGMM"/>
<dbReference type="OrthoDB" id="5829758at2759"/>
<dbReference type="PAN-GO" id="O00170">
    <property type="GO annotations" value="0 GO annotations based on evolutionary models"/>
</dbReference>
<dbReference type="PhylomeDB" id="O00170"/>
<dbReference type="TreeFam" id="TF314507"/>
<dbReference type="PathwayCommons" id="O00170"/>
<dbReference type="Reactome" id="R-HSA-8937144">
    <property type="pathway name" value="Aryl hydrocarbon receptor signalling"/>
</dbReference>
<dbReference type="Reactome" id="R-HSA-8950505">
    <property type="pathway name" value="Gene and protein expression by JAK-STAT signaling after Interleukin-12 stimulation"/>
</dbReference>
<dbReference type="SignaLink" id="O00170"/>
<dbReference type="SIGNOR" id="O00170"/>
<dbReference type="BioGRID-ORCS" id="9049">
    <property type="hits" value="88 hits in 1166 CRISPR screens"/>
</dbReference>
<dbReference type="CD-CODE" id="FB4E32DD">
    <property type="entry name" value="Presynaptic clusters and postsynaptic densities"/>
</dbReference>
<dbReference type="ChiTaRS" id="AIP">
    <property type="organism name" value="human"/>
</dbReference>
<dbReference type="EvolutionaryTrace" id="O00170"/>
<dbReference type="GeneWiki" id="AH_receptor-interacting_protein"/>
<dbReference type="GenomeRNAi" id="9049"/>
<dbReference type="Pharos" id="O00170">
    <property type="development level" value="Tbio"/>
</dbReference>
<dbReference type="PRO" id="PR:O00170"/>
<dbReference type="Proteomes" id="UP000005640">
    <property type="component" value="Chromosome 11"/>
</dbReference>
<dbReference type="RNAct" id="O00170">
    <property type="molecule type" value="protein"/>
</dbReference>
<dbReference type="Bgee" id="ENSG00000110711">
    <property type="expression patterns" value="Expressed in granulocyte and 167 other cell types or tissues"/>
</dbReference>
<dbReference type="ExpressionAtlas" id="O00170">
    <property type="expression patterns" value="baseline and differential"/>
</dbReference>
<dbReference type="GO" id="GO:0034751">
    <property type="term" value="C:aryl hydrocarbon receptor complex"/>
    <property type="evidence" value="ECO:0007669"/>
    <property type="project" value="Ensembl"/>
</dbReference>
<dbReference type="GO" id="GO:0005737">
    <property type="term" value="C:cytoplasm"/>
    <property type="evidence" value="ECO:0000304"/>
    <property type="project" value="ProtInc"/>
</dbReference>
<dbReference type="GO" id="GO:0005829">
    <property type="term" value="C:cytosol"/>
    <property type="evidence" value="ECO:0000314"/>
    <property type="project" value="UniProtKB"/>
</dbReference>
<dbReference type="GO" id="GO:0016020">
    <property type="term" value="C:membrane"/>
    <property type="evidence" value="ECO:0007669"/>
    <property type="project" value="Ensembl"/>
</dbReference>
<dbReference type="GO" id="GO:0005654">
    <property type="term" value="C:nucleoplasm"/>
    <property type="evidence" value="ECO:0000304"/>
    <property type="project" value="Reactome"/>
</dbReference>
<dbReference type="GO" id="GO:0017162">
    <property type="term" value="F:aryl hydrocarbon receptor binding"/>
    <property type="evidence" value="ECO:0007669"/>
    <property type="project" value="Ensembl"/>
</dbReference>
<dbReference type="GO" id="GO:0036004">
    <property type="term" value="F:GAF domain binding"/>
    <property type="evidence" value="ECO:0000314"/>
    <property type="project" value="UniProtKB"/>
</dbReference>
<dbReference type="GO" id="GO:0003755">
    <property type="term" value="F:peptidyl-prolyl cis-trans isomerase activity"/>
    <property type="evidence" value="ECO:0000314"/>
    <property type="project" value="HGNC-UCL"/>
</dbReference>
<dbReference type="GO" id="GO:0003713">
    <property type="term" value="F:transcription coactivator activity"/>
    <property type="evidence" value="ECO:0000304"/>
    <property type="project" value="ProtInc"/>
</dbReference>
<dbReference type="GO" id="GO:0051082">
    <property type="term" value="F:unfolded protein binding"/>
    <property type="evidence" value="ECO:0000314"/>
    <property type="project" value="HGNC-UCL"/>
</dbReference>
<dbReference type="GO" id="GO:0051604">
    <property type="term" value="P:protein maturation"/>
    <property type="evidence" value="ECO:0000314"/>
    <property type="project" value="HGNC-UCL"/>
</dbReference>
<dbReference type="GO" id="GO:0006626">
    <property type="term" value="P:protein targeting to mitochondrion"/>
    <property type="evidence" value="ECO:0000314"/>
    <property type="project" value="HGNC-UCL"/>
</dbReference>
<dbReference type="GO" id="GO:0006805">
    <property type="term" value="P:xenobiotic metabolic process"/>
    <property type="evidence" value="ECO:0007669"/>
    <property type="project" value="Ensembl"/>
</dbReference>
<dbReference type="FunFam" id="1.25.40.10:FF:000052">
    <property type="entry name" value="Aryl-hydrocarbon-interacting protein-like 1"/>
    <property type="match status" value="1"/>
</dbReference>
<dbReference type="FunFam" id="3.10.50.40:FF:000018">
    <property type="entry name" value="Aryl-hydrocarbon-interacting protein-like 1"/>
    <property type="match status" value="1"/>
</dbReference>
<dbReference type="Gene3D" id="3.10.50.40">
    <property type="match status" value="1"/>
</dbReference>
<dbReference type="Gene3D" id="1.25.40.10">
    <property type="entry name" value="Tetratricopeptide repeat domain"/>
    <property type="match status" value="1"/>
</dbReference>
<dbReference type="InterPro" id="IPR039663">
    <property type="entry name" value="AIP/AIPL1/TTC9"/>
</dbReference>
<dbReference type="InterPro" id="IPR056277">
    <property type="entry name" value="PPIase_AIP"/>
</dbReference>
<dbReference type="InterPro" id="IPR046357">
    <property type="entry name" value="PPIase_dom_sf"/>
</dbReference>
<dbReference type="InterPro" id="IPR001179">
    <property type="entry name" value="PPIase_FKBP_dom"/>
</dbReference>
<dbReference type="InterPro" id="IPR011990">
    <property type="entry name" value="TPR-like_helical_dom_sf"/>
</dbReference>
<dbReference type="InterPro" id="IPR019734">
    <property type="entry name" value="TPR_rpt"/>
</dbReference>
<dbReference type="PANTHER" id="PTHR11242:SF3">
    <property type="entry name" value="AH RECEPTOR-INTERACTING PROTEIN"/>
    <property type="match status" value="1"/>
</dbReference>
<dbReference type="PANTHER" id="PTHR11242">
    <property type="entry name" value="ARYL HYDROCARBON RECEPTOR INTERACTING PROTEIN RELATED"/>
    <property type="match status" value="1"/>
</dbReference>
<dbReference type="Pfam" id="PF23322">
    <property type="entry name" value="PPIase_AIP"/>
    <property type="match status" value="1"/>
</dbReference>
<dbReference type="SUPFAM" id="SSF54534">
    <property type="entry name" value="FKBP-like"/>
    <property type="match status" value="1"/>
</dbReference>
<dbReference type="SUPFAM" id="SSF48452">
    <property type="entry name" value="TPR-like"/>
    <property type="match status" value="1"/>
</dbReference>
<dbReference type="PROSITE" id="PS50059">
    <property type="entry name" value="FKBP_PPIASE"/>
    <property type="match status" value="1"/>
</dbReference>
<dbReference type="PROSITE" id="PS50005">
    <property type="entry name" value="TPR"/>
    <property type="match status" value="1"/>
</dbReference>
<dbReference type="PROSITE" id="PS50293">
    <property type="entry name" value="TPR_REGION"/>
    <property type="match status" value="1"/>
</dbReference>
<reference key="1">
    <citation type="journal article" date="1996" name="Nucleic Acids Res.">
        <title>XAP2, a novel hepatitis B virus X-associated protein that inhibits X transactivation.</title>
        <authorList>
            <person name="Kuzhandaivelu N."/>
            <person name="Cong Y.-S."/>
            <person name="Inouye C."/>
            <person name="Yang W.-M."/>
            <person name="Seto E."/>
        </authorList>
    </citation>
    <scope>NUCLEOTIDE SEQUENCE [MRNA]</scope>
    <source>
        <tissue>Lymphoma</tissue>
    </source>
</reference>
<reference key="2">
    <citation type="journal article" date="1997" name="J. Biol. Chem.">
        <title>Ligand-dependent interaction of the aryl hydrocarbon receptor with a novel immunophilin homolog in vivo.</title>
        <authorList>
            <person name="Carver L.A."/>
            <person name="Bradfield C.A."/>
        </authorList>
    </citation>
    <scope>NUCLEOTIDE SEQUENCE [MRNA]</scope>
    <scope>VARIANT LYS-228</scope>
    <source>
        <tissue>B-cell</tissue>
    </source>
</reference>
<reference key="3">
    <citation type="journal article" date="2006" name="Science">
        <title>Pituitary adenoma predisposition caused by germline mutations in the AIP gene.</title>
        <authorList>
            <person name="Vierimaa O."/>
            <person name="Georgitsi M."/>
            <person name="Lehtonen R."/>
            <person name="Vahteristo P."/>
            <person name="Kokko A."/>
            <person name="Raitila A."/>
            <person name="Tuppurainen K."/>
            <person name="Ebeling T.M.L."/>
            <person name="Salmela P.I."/>
            <person name="Paschke R."/>
            <person name="Gundogdu S."/>
            <person name="de Menis E."/>
            <person name="Jaervinen M.J."/>
            <person name="Launonen V."/>
            <person name="Karhu A."/>
            <person name="Aaltonen L.A."/>
        </authorList>
    </citation>
    <scope>NUCLEOTIDE SEQUENCE [GENOMIC DNA]</scope>
    <scope>VARIANT LYS-228</scope>
    <scope>INVOLVEMENT IN PITA1</scope>
</reference>
<reference key="4">
    <citation type="journal article" date="2007" name="J. Clin. Endocrinol. Metab.">
        <title>Aryl hydrocarbon receptor-interacting protein gene mutations in familial isolated pituitary adenomas: analysis in 73 families.</title>
        <authorList>
            <person name="Daly A.F."/>
            <person name="Vanbellinghen J.-F."/>
            <person name="Khoo S.K."/>
            <person name="Jaffrain-Rea M.-L."/>
            <person name="Naves L.A."/>
            <person name="Guitelman M.A."/>
            <person name="Murat A."/>
            <person name="Emy P."/>
            <person name="Gimenez-Roqueplo A.-P."/>
            <person name="Tamburrano G."/>
            <person name="Raverot G."/>
            <person name="Barlier A."/>
            <person name="De Herder W."/>
            <person name="Penfornis A."/>
            <person name="Ciccarelli E."/>
            <person name="Estour B."/>
            <person name="Lecomte P."/>
            <person name="Gatta B."/>
            <person name="Chabre O."/>
            <person name="Sabate M.I."/>
            <person name="Bertagna X."/>
            <person name="Garcia Basavilbaso N."/>
            <person name="Stalldecker G."/>
            <person name="Colao A."/>
            <person name="Ferolla P."/>
            <person name="Wemeau J.-L."/>
            <person name="Caron P."/>
            <person name="Sadoul J.-L."/>
            <person name="Oneto A."/>
            <person name="Archambeaud F."/>
            <person name="Calender A."/>
            <person name="Sinilnikova O."/>
            <person name="Montanana C.F."/>
            <person name="Cavagnini F."/>
            <person name="Hana V."/>
            <person name="Solano A."/>
            <person name="Delettieres D."/>
            <person name="Luccio-Camelo D.C."/>
            <person name="Basso A."/>
            <person name="Rohmer V."/>
            <person name="Brue T."/>
            <person name="Bours V."/>
            <person name="Teh B.T."/>
            <person name="Beckers A."/>
        </authorList>
    </citation>
    <scope>NUCLEOTIDE SEQUENCE [GENOMIC DNA]</scope>
    <scope>VARIANTS PITA1 47-GLY--ARG-54 DEL; GLU-241 AND TRP-271</scope>
    <scope>INVOLVEMENT IN PITA1</scope>
    <scope>VARIANTS HIS-16 AND GLN-307</scope>
</reference>
<reference key="5">
    <citation type="journal article" date="2011" name="Eur. J. Endocrinol.">
        <title>High prevalence of AIP gene mutations following focused screening in young patients with sporadic pituitary macroadenomas.</title>
        <authorList>
            <person name="Tichomirowa M.A."/>
            <person name="Barlier A."/>
            <person name="Daly A.F."/>
            <person name="Jaffrain-Rea M.L."/>
            <person name="Ronchi C."/>
            <person name="Yaneva M."/>
            <person name="Urban J.D."/>
            <person name="Petrossians P."/>
            <person name="Elenkova A."/>
            <person name="Tabarin A."/>
            <person name="Desailloud R."/>
            <person name="Maiter D."/>
            <person name="Schurmeyer T."/>
            <person name="Cozzi R."/>
            <person name="Theodoropoulou M."/>
            <person name="Sievers C."/>
            <person name="Bernabeu I."/>
            <person name="Naves L.A."/>
            <person name="Chabre O."/>
            <person name="Montanana C.F."/>
            <person name="Hana V."/>
            <person name="Halaby G."/>
            <person name="Delemer B."/>
            <person name="Aizpun J.I."/>
            <person name="Sonnet E."/>
            <person name="Longas A.F."/>
            <person name="Hagelstein M.T."/>
            <person name="Caron P."/>
            <person name="Stalla G.K."/>
            <person name="Bours V."/>
            <person name="Zacharieva S."/>
            <person name="Spada A."/>
            <person name="Brue T."/>
            <person name="Beckers A."/>
        </authorList>
    </citation>
    <scope>NUCLEOTIDE SEQUENCE [GENOMIC DNA]</scope>
</reference>
<reference key="6">
    <citation type="journal article" date="2006" name="Nature">
        <title>Human chromosome 11 DNA sequence and analysis including novel gene identification.</title>
        <authorList>
            <person name="Taylor T.D."/>
            <person name="Noguchi H."/>
            <person name="Totoki Y."/>
            <person name="Toyoda A."/>
            <person name="Kuroki Y."/>
            <person name="Dewar K."/>
            <person name="Lloyd C."/>
            <person name="Itoh T."/>
            <person name="Takeda T."/>
            <person name="Kim D.-W."/>
            <person name="She X."/>
            <person name="Barlow K.F."/>
            <person name="Bloom T."/>
            <person name="Bruford E."/>
            <person name="Chang J.L."/>
            <person name="Cuomo C.A."/>
            <person name="Eichler E."/>
            <person name="FitzGerald M.G."/>
            <person name="Jaffe D.B."/>
            <person name="LaButti K."/>
            <person name="Nicol R."/>
            <person name="Park H.-S."/>
            <person name="Seaman C."/>
            <person name="Sougnez C."/>
            <person name="Yang X."/>
            <person name="Zimmer A.R."/>
            <person name="Zody M.C."/>
            <person name="Birren B.W."/>
            <person name="Nusbaum C."/>
            <person name="Fujiyama A."/>
            <person name="Hattori M."/>
            <person name="Rogers J."/>
            <person name="Lander E.S."/>
            <person name="Sakaki Y."/>
        </authorList>
    </citation>
    <scope>NUCLEOTIDE SEQUENCE [LARGE SCALE GENOMIC DNA]</scope>
</reference>
<reference key="7">
    <citation type="journal article" date="2004" name="Genome Res.">
        <title>The status, quality, and expansion of the NIH full-length cDNA project: the Mammalian Gene Collection (MGC).</title>
        <authorList>
            <consortium name="The MGC Project Team"/>
        </authorList>
    </citation>
    <scope>NUCLEOTIDE SEQUENCE [LARGE SCALE MRNA]</scope>
    <scope>VARIANT LYS-228</scope>
    <source>
        <tissue>Brain</tissue>
    </source>
</reference>
<reference key="8">
    <citation type="journal article" date="2005" name="Nat. Biotechnol.">
        <title>Immunoaffinity profiling of tyrosine phosphorylation in cancer cells.</title>
        <authorList>
            <person name="Rush J."/>
            <person name="Moritz A."/>
            <person name="Lee K.A."/>
            <person name="Guo A."/>
            <person name="Goss V.L."/>
            <person name="Spek E.J."/>
            <person name="Zhang H."/>
            <person name="Zha X.-M."/>
            <person name="Polakiewicz R.D."/>
            <person name="Comb M.J."/>
        </authorList>
    </citation>
    <scope>IDENTIFICATION BY MASS SPECTROMETRY [LARGE SCALE ANALYSIS]</scope>
</reference>
<reference key="9">
    <citation type="journal article" date="2007" name="J. Clin. Endocrinol. Metab.">
        <title>Germline mutation in the aryl hydrocarbon receptor interacting protein gene in familial somatotropinoma.</title>
        <authorList>
            <person name="Toledo R.A."/>
            <person name="Lourenco D.M. Jr."/>
            <person name="Liberman B."/>
            <person name="Cunha-Neto M.B.C."/>
            <person name="Cavalcanti M.G."/>
            <person name="Moyses C.B."/>
            <person name="Toledo S.P.A."/>
            <person name="Dahia P.L.M."/>
        </authorList>
    </citation>
    <scope>INVOLVEMENT IN PITA1</scope>
</reference>
<reference key="10">
    <citation type="journal article" date="2007" name="J. Clin. Endocrinol. Metab.">
        <title>Mutations in the aryl hydrocarbon receptor interacting protein gene are not highly prevalent among subjects with sporadic pituitary adenomas.</title>
        <authorList>
            <person name="Barlier A."/>
            <person name="Vanbellinghen J.-F."/>
            <person name="Daly A.F."/>
            <person name="Silvy M."/>
            <person name="Jaffrain-Rea M.-L."/>
            <person name="Trouillas J."/>
            <person name="Tamagno G."/>
            <person name="Cazabat L."/>
            <person name="Bours V."/>
            <person name="Brue T."/>
            <person name="Enjalbert A."/>
            <person name="Beckers A."/>
        </authorList>
    </citation>
    <scope>INVOLVEMENT IN PITA1</scope>
    <scope>VARIANT LYS-228</scope>
</reference>
<reference key="11">
    <citation type="journal article" date="2009" name="J. Clin. Endocrinol. Metab.">
        <title>The tyrosine kinase receptor RET interacts in vivo with aryl hydrocarbon receptor-interacting protein to alter survivin availability.</title>
        <authorList>
            <person name="Vargiolu M."/>
            <person name="Fusco D."/>
            <person name="Kurelac I."/>
            <person name="Dirnberger D."/>
            <person name="Baumeister R."/>
            <person name="Morra I."/>
            <person name="Melcarne A."/>
            <person name="Rimondini R."/>
            <person name="Romeo G."/>
            <person name="Bonora E."/>
        </authorList>
    </citation>
    <scope>INTERACTION WITH RET</scope>
</reference>
<reference key="12">
    <citation type="journal article" date="2013" name="J. Proteome Res.">
        <title>Toward a comprehensive characterization of a human cancer cell phosphoproteome.</title>
        <authorList>
            <person name="Zhou H."/>
            <person name="Di Palma S."/>
            <person name="Preisinger C."/>
            <person name="Peng M."/>
            <person name="Polat A.N."/>
            <person name="Heck A.J."/>
            <person name="Mohammed S."/>
        </authorList>
    </citation>
    <scope>PHOSPHORYLATION [LARGE SCALE ANALYSIS] AT SER-43</scope>
    <scope>IDENTIFICATION BY MASS SPECTROMETRY [LARGE SCALE ANALYSIS]</scope>
    <source>
        <tissue>Cervix carcinoma</tissue>
    </source>
</reference>
<reference key="13">
    <citation type="journal article" date="2012" name="PLoS ONE">
        <title>Structure of the TPR domain of AIP: lack of client protein interaction with the C-terminal alpha-7 helix of the TPR domain of AIP is sufficient for pituitary adenoma predisposition.</title>
        <authorList>
            <person name="Morgan R.M."/>
            <person name="Hernandez-Ramirez L.C."/>
            <person name="Trivellin G."/>
            <person name="Zhou L."/>
            <person name="Roe S.M."/>
            <person name="Korbonits M."/>
            <person name="Prodromou C."/>
        </authorList>
    </citation>
    <scope>X-RAY CRYSTALLOGRAPHY (1.9 ANGSTROMS) OF 166-330 IN COMPLEX WITH HSP90 AND TOMM20 PEPTIDES</scope>
    <scope>TPR REPEATS</scope>
</reference>
<reference key="14">
    <citation type="journal article" date="2007" name="Proc. Natl. Acad. Sci. U.S.A.">
        <title>Molecular diagnosis of pituitary adenoma predisposition caused by aryl hydrocarbon receptor-interacting protein gene mutations.</title>
        <authorList>
            <person name="Georgitsi M."/>
            <person name="Raitila A."/>
            <person name="Karhu A."/>
            <person name="Tuppurainen K."/>
            <person name="Maekinen M.J."/>
            <person name="Vierimaa O."/>
            <person name="Paschke R."/>
            <person name="Saeger W."/>
            <person name="van der Luijt R.B."/>
            <person name="Sane T."/>
            <person name="Robledo M."/>
            <person name="De Menis E."/>
            <person name="Weil R.J."/>
            <person name="Wasik A."/>
            <person name="Zielinski G."/>
            <person name="Lucewicz O."/>
            <person name="Lubinski J."/>
            <person name="Launonen V."/>
            <person name="Vahteristo P."/>
            <person name="Aaltonen L.A."/>
        </authorList>
    </citation>
    <scope>VARIANT HIS-16</scope>
    <scope>VARIANT PITA1 GLN-304</scope>
    <scope>INVOLVEMENT IN PITA1</scope>
</reference>
<reference key="15">
    <citation type="journal article" date="2008" name="Clin. Endocrinol. (Oxf.)">
        <title>Aryl hydrocarbon receptor interacting protein (AIP) gene mutation analysis in children and adolescents with sporadic pituitary adenomas.</title>
        <authorList>
            <person name="Georgitsi M."/>
            <person name="De Menis E."/>
            <person name="Cannavo S."/>
            <person name="Maekinen M.J."/>
            <person name="Tuppurainen K."/>
            <person name="Pauletto P."/>
            <person name="Curto L."/>
            <person name="Weil R.J."/>
            <person name="Paschke R."/>
            <person name="Zielinski G."/>
            <person name="Wasik A."/>
            <person name="Lubinski J."/>
            <person name="Vahteristo P."/>
            <person name="Karhu A."/>
            <person name="Aaltonen L.A."/>
        </authorList>
    </citation>
    <scope>VARIANT PITA1 TYR-248 DEL</scope>
    <scope>INVOLVEMENT IN PITA1</scope>
</reference>
<reference key="16">
    <citation type="journal article" date="2011" name="BMC Syst. Biol.">
        <title>Initial characterization of the human central proteome.</title>
        <authorList>
            <person name="Burkard T.R."/>
            <person name="Planyavsky M."/>
            <person name="Kaupe I."/>
            <person name="Breitwieser F.P."/>
            <person name="Buerckstuemmer T."/>
            <person name="Bennett K.L."/>
            <person name="Superti-Furga G."/>
            <person name="Colinge J."/>
        </authorList>
    </citation>
    <scope>VARIANT [LARGE SCALE ANALYSIS] LYS-228</scope>
    <scope>IDENTIFICATION BY MASS SPECTROMETRY [LARGE SCALE ANALYSIS]</scope>
</reference>
<evidence type="ECO:0000255" key="1"/>
<evidence type="ECO:0000255" key="2">
    <source>
        <dbReference type="PROSITE-ProRule" id="PRU00277"/>
    </source>
</evidence>
<evidence type="ECO:0000255" key="3">
    <source>
        <dbReference type="PROSITE-ProRule" id="PRU00339"/>
    </source>
</evidence>
<evidence type="ECO:0000269" key="4">
    <source>
    </source>
</evidence>
<evidence type="ECO:0000269" key="5">
    <source>
    </source>
</evidence>
<evidence type="ECO:0000269" key="6">
    <source>
    </source>
</evidence>
<evidence type="ECO:0000269" key="7">
    <source>
    </source>
</evidence>
<evidence type="ECO:0000269" key="8">
    <source>
    </source>
</evidence>
<evidence type="ECO:0000269" key="9">
    <source>
    </source>
</evidence>
<evidence type="ECO:0000269" key="10">
    <source>
    </source>
</evidence>
<evidence type="ECO:0000269" key="11">
    <source>
    </source>
</evidence>
<evidence type="ECO:0000269" key="12">
    <source>
    </source>
</evidence>
<evidence type="ECO:0000269" key="13">
    <source>
    </source>
</evidence>
<evidence type="ECO:0000269" key="14">
    <source>
    </source>
</evidence>
<evidence type="ECO:0007744" key="15">
    <source>
    </source>
</evidence>
<evidence type="ECO:0007744" key="16">
    <source>
    </source>
</evidence>
<evidence type="ECO:0007829" key="17">
    <source>
        <dbReference type="PDB" id="2LKN"/>
    </source>
</evidence>
<evidence type="ECO:0007829" key="18">
    <source>
        <dbReference type="PDB" id="4APO"/>
    </source>
</evidence>
<evidence type="ECO:0007829" key="19">
    <source>
        <dbReference type="PDB" id="7ZUB"/>
    </source>
</evidence>
<evidence type="ECO:0007829" key="20">
    <source>
        <dbReference type="PDB" id="8QMO"/>
    </source>
</evidence>
<protein>
    <recommendedName>
        <fullName>AH receptor-interacting protein</fullName>
        <shortName>AIP</shortName>
    </recommendedName>
    <alternativeName>
        <fullName>Aryl-hydrocarbon receptor-interacting protein</fullName>
    </alternativeName>
    <alternativeName>
        <fullName>HBV X-associated protein 2</fullName>
        <shortName>XAP-2</shortName>
    </alternativeName>
    <alternativeName>
        <fullName>Immunophilin homolog ARA9</fullName>
    </alternativeName>
</protein>
<feature type="chain" id="PRO_0000075339" description="AH receptor-interacting protein">
    <location>
        <begin position="1"/>
        <end position="330"/>
    </location>
</feature>
<feature type="domain" description="PPIase FKBP-type" evidence="2">
    <location>
        <begin position="31"/>
        <end position="121"/>
    </location>
</feature>
<feature type="repeat" description="TPR 1" evidence="1 12">
    <location>
        <begin position="179"/>
        <end position="212"/>
    </location>
</feature>
<feature type="repeat" description="TPR 2" evidence="12">
    <location>
        <begin position="231"/>
        <end position="264"/>
    </location>
</feature>
<feature type="repeat" description="TPR 3" evidence="1 3 12">
    <location>
        <begin position="265"/>
        <end position="298"/>
    </location>
</feature>
<feature type="modified residue" description="Phosphoserine" evidence="16">
    <location>
        <position position="43"/>
    </location>
</feature>
<feature type="sequence variant" id="VAR_043908" description="In dbSNP:rs145047094." evidence="6 9">
    <original>R</original>
    <variation>H</variation>
    <location>
        <position position="16"/>
    </location>
</feature>
<feature type="sequence variant" id="VAR_058407" description="In PITA1; uncertain significance." evidence="6">
    <location>
        <begin position="47"/>
        <end position="54"/>
    </location>
</feature>
<feature type="sequence variant" id="VAR_043909" description="In dbSNP:rs641081." evidence="4 5 7 14 15">
    <original>Q</original>
    <variation>K</variation>
    <location>
        <position position="228"/>
    </location>
</feature>
<feature type="sequence variant" id="VAR_043910" description="In PITA1; uncertain significance; dbSNP:rs267606573." evidence="6">
    <original>K</original>
    <variation>E</variation>
    <location>
        <position position="241"/>
    </location>
</feature>
<feature type="sequence variant" id="VAR_043911" description="In PITA1; uncertain significance; ACTH-secreting pituitary adenoma; dbSNP:rs267606574." evidence="10">
    <location>
        <position position="248"/>
    </location>
</feature>
<feature type="sequence variant" id="VAR_043912" description="In PITA1; uncertain significance; dbSNP:rs267606579." evidence="6">
    <original>R</original>
    <variation>W</variation>
    <location>
        <position position="271"/>
    </location>
</feature>
<feature type="sequence variant" id="VAR_043913" description="In PITA1; ACTH-secreting pituitary adenoma; dbSNP:rs104894190." evidence="9">
    <original>R</original>
    <variation>Q</variation>
    <location>
        <position position="304"/>
    </location>
</feature>
<feature type="sequence variant" id="VAR_061545" description="In dbSNP:rs4930199." evidence="4 5 13 14">
    <original>R</original>
    <variation>Q</variation>
    <location>
        <position position="307"/>
    </location>
</feature>
<feature type="helix" evidence="20">
    <location>
        <begin position="4"/>
        <end position="11"/>
    </location>
</feature>
<feature type="strand" evidence="20">
    <location>
        <begin position="15"/>
        <end position="19"/>
    </location>
</feature>
<feature type="strand" evidence="20">
    <location>
        <begin position="33"/>
        <end position="46"/>
    </location>
</feature>
<feature type="strand" evidence="19">
    <location>
        <begin position="49"/>
        <end position="53"/>
    </location>
</feature>
<feature type="turn" evidence="20">
    <location>
        <begin position="54"/>
        <end position="57"/>
    </location>
</feature>
<feature type="strand" evidence="19">
    <location>
        <begin position="60"/>
        <end position="66"/>
    </location>
</feature>
<feature type="helix" evidence="20">
    <location>
        <begin position="72"/>
        <end position="78"/>
    </location>
</feature>
<feature type="strand" evidence="20">
    <location>
        <begin position="85"/>
        <end position="88"/>
    </location>
</feature>
<feature type="turn" evidence="20">
    <location>
        <begin position="92"/>
        <end position="94"/>
    </location>
</feature>
<feature type="helix" evidence="20">
    <location>
        <begin position="98"/>
        <end position="100"/>
    </location>
</feature>
<feature type="turn" evidence="20">
    <location>
        <begin position="101"/>
        <end position="107"/>
    </location>
</feature>
<feature type="helix" evidence="17">
    <location>
        <begin position="108"/>
        <end position="110"/>
    </location>
</feature>
<feature type="turn" evidence="17">
    <location>
        <begin position="113"/>
        <end position="117"/>
    </location>
</feature>
<feature type="turn" evidence="17">
    <location>
        <begin position="137"/>
        <end position="139"/>
    </location>
</feature>
<feature type="helix" evidence="20">
    <location>
        <begin position="140"/>
        <end position="142"/>
    </location>
</feature>
<feature type="strand" evidence="20">
    <location>
        <begin position="148"/>
        <end position="158"/>
    </location>
</feature>
<feature type="turn" evidence="17">
    <location>
        <begin position="160"/>
        <end position="162"/>
    </location>
</feature>
<feature type="helix" evidence="20">
    <location>
        <begin position="167"/>
        <end position="169"/>
    </location>
</feature>
<feature type="helix" evidence="18">
    <location>
        <begin position="173"/>
        <end position="176"/>
    </location>
</feature>
<feature type="helix" evidence="18">
    <location>
        <begin position="178"/>
        <end position="192"/>
    </location>
</feature>
<feature type="helix" evidence="18">
    <location>
        <begin position="195"/>
        <end position="213"/>
    </location>
</feature>
<feature type="helix" evidence="18">
    <location>
        <begin position="221"/>
        <end position="243"/>
    </location>
</feature>
<feature type="helix" evidence="18">
    <location>
        <begin position="248"/>
        <end position="260"/>
    </location>
</feature>
<feature type="helix" evidence="18">
    <location>
        <begin position="265"/>
        <end position="277"/>
    </location>
</feature>
<feature type="helix" evidence="18">
    <location>
        <begin position="281"/>
        <end position="294"/>
    </location>
</feature>
<feature type="helix" evidence="18">
    <location>
        <begin position="296"/>
        <end position="298"/>
    </location>
</feature>
<feature type="helix" evidence="18">
    <location>
        <begin position="299"/>
        <end position="311"/>
    </location>
</feature>
<feature type="helix" evidence="18">
    <location>
        <begin position="314"/>
        <end position="324"/>
    </location>
</feature>
<feature type="strand" evidence="19">
    <location>
        <begin position="325"/>
        <end position="327"/>
    </location>
</feature>